<protein>
    <recommendedName>
        <fullName>Histamine N-methyltransferase</fullName>
        <shortName>HMT</shortName>
        <ecNumber evidence="1">2.1.1.8</ecNumber>
    </recommendedName>
</protein>
<comment type="function">
    <text evidence="1">Inactivates histamine by N-methylation. Plays an important role in degrading histamine and in regulating the airway response to histamine.</text>
</comment>
<comment type="catalytic activity">
    <reaction evidence="1 2">
        <text>histamine + S-adenosyl-L-methionine = N(tau)-methylhistamine + S-adenosyl-L-homocysteine + H(+)</text>
        <dbReference type="Rhea" id="RHEA:19301"/>
        <dbReference type="ChEBI" id="CHEBI:15378"/>
        <dbReference type="ChEBI" id="CHEBI:57856"/>
        <dbReference type="ChEBI" id="CHEBI:58432"/>
        <dbReference type="ChEBI" id="CHEBI:58600"/>
        <dbReference type="ChEBI" id="CHEBI:59789"/>
        <dbReference type="EC" id="2.1.1.8"/>
    </reaction>
</comment>
<comment type="subunit">
    <text evidence="1">Monomer.</text>
</comment>
<comment type="subcellular location">
    <subcellularLocation>
        <location evidence="1">Cytoplasm</location>
    </subcellularLocation>
</comment>
<comment type="similarity">
    <text evidence="2">Belongs to the class I-like SAM-binding methyltransferase superfamily. HNMT family.</text>
</comment>
<keyword id="KW-0963">Cytoplasm</keyword>
<keyword id="KW-0489">Methyltransferase</keyword>
<keyword id="KW-1185">Reference proteome</keyword>
<keyword id="KW-0949">S-adenosyl-L-methionine</keyword>
<keyword id="KW-0808">Transferase</keyword>
<gene>
    <name type="primary">HNMT</name>
</gene>
<evidence type="ECO:0000250" key="1">
    <source>
        <dbReference type="UniProtKB" id="P50135"/>
    </source>
</evidence>
<evidence type="ECO:0000255" key="2">
    <source>
        <dbReference type="PROSITE-ProRule" id="PRU00929"/>
    </source>
</evidence>
<accession>Q58DV7</accession>
<accession>Q29RR4</accession>
<organism>
    <name type="scientific">Bos taurus</name>
    <name type="common">Bovine</name>
    <dbReference type="NCBI Taxonomy" id="9913"/>
    <lineage>
        <taxon>Eukaryota</taxon>
        <taxon>Metazoa</taxon>
        <taxon>Chordata</taxon>
        <taxon>Craniata</taxon>
        <taxon>Vertebrata</taxon>
        <taxon>Euteleostomi</taxon>
        <taxon>Mammalia</taxon>
        <taxon>Eutheria</taxon>
        <taxon>Laurasiatheria</taxon>
        <taxon>Artiodactyla</taxon>
        <taxon>Ruminantia</taxon>
        <taxon>Pecora</taxon>
        <taxon>Bovidae</taxon>
        <taxon>Bovinae</taxon>
        <taxon>Bos</taxon>
    </lineage>
</organism>
<proteinExistence type="evidence at transcript level"/>
<name>HNMT_BOVIN</name>
<reference key="1">
    <citation type="journal article" date="2005" name="BMC Genomics">
        <title>Characterization of 954 bovine full-CDS cDNA sequences.</title>
        <authorList>
            <person name="Harhay G.P."/>
            <person name="Sonstegard T.S."/>
            <person name="Keele J.W."/>
            <person name="Heaton M.P."/>
            <person name="Clawson M.L."/>
            <person name="Snelling W.M."/>
            <person name="Wiedmann R.T."/>
            <person name="Van Tassell C.P."/>
            <person name="Smith T.P.L."/>
        </authorList>
    </citation>
    <scope>NUCLEOTIDE SEQUENCE [LARGE SCALE MRNA]</scope>
</reference>
<reference key="2">
    <citation type="submission" date="2006-02" db="EMBL/GenBank/DDBJ databases">
        <authorList>
            <consortium name="NIH - Mammalian Gene Collection (MGC) project"/>
        </authorList>
    </citation>
    <scope>NUCLEOTIDE SEQUENCE [LARGE SCALE MRNA]</scope>
    <source>
        <strain>Hereford</strain>
        <tissue>Hypothalamus</tissue>
    </source>
</reference>
<sequence length="292" mass="33646">MASSMRSLFTDHSRYVESFRRFLSNSTEHQCMQEFMDKKLPGIIARIGDIKSEIKILSIGGGAGEIDLQILSKVQAQYPGVHIINEVVEPSAEQITKYKELVAKTSNLENIKFAWHKETSSEYQNRMMEKKELQRWDFIHMIQMLYYVKDIPATLKFFHSLLATNAKILIIIVSGASSWQKLWEKYGSRLPRNDLCQYVTSSDLTQMLDKLGIKYEYYDLLSTMDISDCFIDGNENGDLLWDFLTETCNFNTTAPPDLKAEIMKDLQKPEFSIKKEGKVLFNNSLSFIVVEA</sequence>
<feature type="chain" id="PRO_0000084019" description="Histamine N-methyltransferase">
    <location>
        <begin position="1"/>
        <end position="292"/>
    </location>
</feature>
<feature type="binding site" evidence="2">
    <location>
        <position position="28"/>
    </location>
    <ligand>
        <name>substrate</name>
    </ligand>
</feature>
<feature type="binding site" evidence="2">
    <location>
        <position position="60"/>
    </location>
    <ligand>
        <name>S-adenosyl-L-methionine</name>
        <dbReference type="ChEBI" id="CHEBI:59789"/>
    </ligand>
</feature>
<feature type="binding site" evidence="2">
    <location>
        <position position="89"/>
    </location>
    <ligand>
        <name>S-adenosyl-L-methionine</name>
        <dbReference type="ChEBI" id="CHEBI:59789"/>
    </ligand>
</feature>
<feature type="binding site" evidence="2">
    <location>
        <position position="94"/>
    </location>
    <ligand>
        <name>S-adenosyl-L-methionine</name>
        <dbReference type="ChEBI" id="CHEBI:59789"/>
    </ligand>
</feature>
<feature type="binding site" evidence="2">
    <location>
        <position position="120"/>
    </location>
    <ligand>
        <name>S-adenosyl-L-methionine</name>
        <dbReference type="ChEBI" id="CHEBI:59789"/>
    </ligand>
</feature>
<feature type="binding site" evidence="2">
    <location>
        <position position="142"/>
    </location>
    <ligand>
        <name>S-adenosyl-L-methionine</name>
        <dbReference type="ChEBI" id="CHEBI:59789"/>
    </ligand>
</feature>
<feature type="binding site" evidence="2">
    <location>
        <position position="283"/>
    </location>
    <ligand>
        <name>substrate</name>
    </ligand>
</feature>
<dbReference type="EC" id="2.1.1.8" evidence="1"/>
<dbReference type="EMBL" id="BT021490">
    <property type="protein sequence ID" value="AAX46337.1"/>
    <property type="molecule type" value="mRNA"/>
</dbReference>
<dbReference type="EMBL" id="BC114060">
    <property type="protein sequence ID" value="AAI14061.1"/>
    <property type="molecule type" value="mRNA"/>
</dbReference>
<dbReference type="RefSeq" id="NP_001030511.1">
    <property type="nucleotide sequence ID" value="NM_001035434.1"/>
</dbReference>
<dbReference type="RefSeq" id="XP_010800392.1">
    <property type="nucleotide sequence ID" value="XM_010802090.2"/>
</dbReference>
<dbReference type="RefSeq" id="XP_059732396.1">
    <property type="nucleotide sequence ID" value="XM_059876413.1"/>
</dbReference>
<dbReference type="SMR" id="Q58DV7"/>
<dbReference type="FunCoup" id="Q58DV7">
    <property type="interactions" value="120"/>
</dbReference>
<dbReference type="STRING" id="9913.ENSBTAP00000019196"/>
<dbReference type="PaxDb" id="9913-ENSBTAP00000019196"/>
<dbReference type="Ensembl" id="ENSBTAT00000019196.7">
    <property type="protein sequence ID" value="ENSBTAP00000019196.5"/>
    <property type="gene ID" value="ENSBTAG00000014432.7"/>
</dbReference>
<dbReference type="GeneID" id="613413"/>
<dbReference type="KEGG" id="bta:613413"/>
<dbReference type="CTD" id="3176"/>
<dbReference type="VEuPathDB" id="HostDB:ENSBTAG00000014432"/>
<dbReference type="VGNC" id="VGNC:29893">
    <property type="gene designation" value="HNMT"/>
</dbReference>
<dbReference type="eggNOG" id="ENOG502QQJ1">
    <property type="taxonomic scope" value="Eukaryota"/>
</dbReference>
<dbReference type="GeneTree" id="ENSGT00390000002862"/>
<dbReference type="HOGENOM" id="CLU_058117_1_0_1"/>
<dbReference type="InParanoid" id="Q58DV7"/>
<dbReference type="OMA" id="KNIKFAW"/>
<dbReference type="OrthoDB" id="5984880at2759"/>
<dbReference type="TreeFam" id="TF331080"/>
<dbReference type="Proteomes" id="UP000009136">
    <property type="component" value="Chromosome 2"/>
</dbReference>
<dbReference type="Bgee" id="ENSBTAG00000014432">
    <property type="expression patterns" value="Expressed in monocyte and 98 other cell types or tissues"/>
</dbReference>
<dbReference type="GO" id="GO:0005813">
    <property type="term" value="C:centrosome"/>
    <property type="evidence" value="ECO:0007669"/>
    <property type="project" value="Ensembl"/>
</dbReference>
<dbReference type="GO" id="GO:0005737">
    <property type="term" value="C:cytoplasm"/>
    <property type="evidence" value="ECO:0000250"/>
    <property type="project" value="UniProtKB"/>
</dbReference>
<dbReference type="GO" id="GO:0005829">
    <property type="term" value="C:cytosol"/>
    <property type="evidence" value="ECO:0007669"/>
    <property type="project" value="Ensembl"/>
</dbReference>
<dbReference type="GO" id="GO:0005654">
    <property type="term" value="C:nucleoplasm"/>
    <property type="evidence" value="ECO:0007669"/>
    <property type="project" value="Ensembl"/>
</dbReference>
<dbReference type="GO" id="GO:0046539">
    <property type="term" value="F:histamine N-methyltransferase activity"/>
    <property type="evidence" value="ECO:0000250"/>
    <property type="project" value="UniProtKB"/>
</dbReference>
<dbReference type="GO" id="GO:0001695">
    <property type="term" value="P:histamine catabolic process"/>
    <property type="evidence" value="ECO:0000250"/>
    <property type="project" value="UniProtKB"/>
</dbReference>
<dbReference type="GO" id="GO:0032259">
    <property type="term" value="P:methylation"/>
    <property type="evidence" value="ECO:0000250"/>
    <property type="project" value="UniProtKB"/>
</dbReference>
<dbReference type="CDD" id="cd02440">
    <property type="entry name" value="AdoMet_MTases"/>
    <property type="match status" value="1"/>
</dbReference>
<dbReference type="FunFam" id="3.40.50.150:FF:000118">
    <property type="entry name" value="Histamine N-methyltransferase"/>
    <property type="match status" value="1"/>
</dbReference>
<dbReference type="Gene3D" id="3.40.50.150">
    <property type="entry name" value="Vaccinia Virus protein VP39"/>
    <property type="match status" value="1"/>
</dbReference>
<dbReference type="InterPro" id="IPR016673">
    <property type="entry name" value="HHMT-like"/>
</dbReference>
<dbReference type="InterPro" id="IPR029063">
    <property type="entry name" value="SAM-dependent_MTases_sf"/>
</dbReference>
<dbReference type="Pfam" id="PF13489">
    <property type="entry name" value="Methyltransf_23"/>
    <property type="match status" value="1"/>
</dbReference>
<dbReference type="PIRSF" id="PIRSF016616">
    <property type="entry name" value="HHMT"/>
    <property type="match status" value="1"/>
</dbReference>
<dbReference type="SUPFAM" id="SSF53335">
    <property type="entry name" value="S-adenosyl-L-methionine-dependent methyltransferases"/>
    <property type="match status" value="1"/>
</dbReference>
<dbReference type="PROSITE" id="PS51597">
    <property type="entry name" value="SAM_HNMT"/>
    <property type="match status" value="1"/>
</dbReference>